<evidence type="ECO:0000255" key="1">
    <source>
        <dbReference type="HAMAP-Rule" id="MF_00175"/>
    </source>
</evidence>
<evidence type="ECO:0000255" key="2">
    <source>
        <dbReference type="PROSITE-ProRule" id="PRU01250"/>
    </source>
</evidence>
<comment type="function">
    <text evidence="1">ATP-dependent specificity component of the Clp protease. It directs the protease to specific substrates. Can perform chaperone functions in the absence of ClpP.</text>
</comment>
<comment type="subunit">
    <text evidence="1">Component of the ClpX-ClpP complex. Forms a hexameric ring that, in the presence of ATP, binds to fourteen ClpP subunits assembled into a disk-like structure with a central cavity, resembling the structure of eukaryotic proteasomes.</text>
</comment>
<comment type="similarity">
    <text evidence="1">Belongs to the ClpX chaperone family.</text>
</comment>
<gene>
    <name evidence="1" type="primary">clpX</name>
    <name type="ordered locus">Bind_2183</name>
</gene>
<sequence>MTKVGGSDSKNTLYCSFCGKSQHEVRKLIAGPTVFICDECVELCMDIIREENKSSLVKSRDGIPTPREICKVLDDYVIGQPQAKRVLSVAVHNHYKRLNHATKHNDVELAKSNILLIGPTGSGKTLLAQTLARILDVPFTMADATTLTEAGYVGEDVENIILKLLQASDYNVERAQRGIVYIDEIDKISRKSDNPSITRDVSGEGVQQALLKIMEGTVASVPPQGGRKHPQQEFLQVDTTNILFICGGAFAGLEKIISTRGKTTSIGFAASVQAPDDRRTGEIFRKVEPEDLLKFGLIPEFVGRLPVIATLEDLDEEALKKILTEPKNALVKQYQRLFEMENTELTFQDEALNVVAKKAIERKTGARGLRSIMESILLDTMFDLPGLDSVEQVVIGPDVVEGKSRPLYIYAERNEKSGTSA</sequence>
<name>CLPX_BEII9</name>
<proteinExistence type="inferred from homology"/>
<dbReference type="EMBL" id="CP001016">
    <property type="protein sequence ID" value="ACB95803.1"/>
    <property type="molecule type" value="Genomic_DNA"/>
</dbReference>
<dbReference type="RefSeq" id="WP_012385158.1">
    <property type="nucleotide sequence ID" value="NC_010581.1"/>
</dbReference>
<dbReference type="SMR" id="B2IGP2"/>
<dbReference type="STRING" id="395963.Bind_2183"/>
<dbReference type="KEGG" id="bid:Bind_2183"/>
<dbReference type="eggNOG" id="COG1219">
    <property type="taxonomic scope" value="Bacteria"/>
</dbReference>
<dbReference type="HOGENOM" id="CLU_014218_8_2_5"/>
<dbReference type="OrthoDB" id="9804062at2"/>
<dbReference type="Proteomes" id="UP000001695">
    <property type="component" value="Chromosome"/>
</dbReference>
<dbReference type="GO" id="GO:0009376">
    <property type="term" value="C:HslUV protease complex"/>
    <property type="evidence" value="ECO:0007669"/>
    <property type="project" value="TreeGrafter"/>
</dbReference>
<dbReference type="GO" id="GO:0005524">
    <property type="term" value="F:ATP binding"/>
    <property type="evidence" value="ECO:0007669"/>
    <property type="project" value="UniProtKB-UniRule"/>
</dbReference>
<dbReference type="GO" id="GO:0016887">
    <property type="term" value="F:ATP hydrolysis activity"/>
    <property type="evidence" value="ECO:0007669"/>
    <property type="project" value="InterPro"/>
</dbReference>
<dbReference type="GO" id="GO:0140662">
    <property type="term" value="F:ATP-dependent protein folding chaperone"/>
    <property type="evidence" value="ECO:0007669"/>
    <property type="project" value="InterPro"/>
</dbReference>
<dbReference type="GO" id="GO:0046983">
    <property type="term" value="F:protein dimerization activity"/>
    <property type="evidence" value="ECO:0007669"/>
    <property type="project" value="InterPro"/>
</dbReference>
<dbReference type="GO" id="GO:0051082">
    <property type="term" value="F:unfolded protein binding"/>
    <property type="evidence" value="ECO:0007669"/>
    <property type="project" value="UniProtKB-UniRule"/>
</dbReference>
<dbReference type="GO" id="GO:0008270">
    <property type="term" value="F:zinc ion binding"/>
    <property type="evidence" value="ECO:0007669"/>
    <property type="project" value="InterPro"/>
</dbReference>
<dbReference type="GO" id="GO:0051301">
    <property type="term" value="P:cell division"/>
    <property type="evidence" value="ECO:0007669"/>
    <property type="project" value="TreeGrafter"/>
</dbReference>
<dbReference type="GO" id="GO:0051603">
    <property type="term" value="P:proteolysis involved in protein catabolic process"/>
    <property type="evidence" value="ECO:0007669"/>
    <property type="project" value="TreeGrafter"/>
</dbReference>
<dbReference type="CDD" id="cd19497">
    <property type="entry name" value="RecA-like_ClpX"/>
    <property type="match status" value="1"/>
</dbReference>
<dbReference type="FunFam" id="1.10.8.60:FF:000002">
    <property type="entry name" value="ATP-dependent Clp protease ATP-binding subunit ClpX"/>
    <property type="match status" value="1"/>
</dbReference>
<dbReference type="FunFam" id="3.40.50.300:FF:000005">
    <property type="entry name" value="ATP-dependent Clp protease ATP-binding subunit ClpX"/>
    <property type="match status" value="1"/>
</dbReference>
<dbReference type="Gene3D" id="1.10.8.60">
    <property type="match status" value="1"/>
</dbReference>
<dbReference type="Gene3D" id="6.20.220.10">
    <property type="entry name" value="ClpX chaperone, C4-type zinc finger domain"/>
    <property type="match status" value="1"/>
</dbReference>
<dbReference type="Gene3D" id="3.40.50.300">
    <property type="entry name" value="P-loop containing nucleotide triphosphate hydrolases"/>
    <property type="match status" value="1"/>
</dbReference>
<dbReference type="HAMAP" id="MF_00175">
    <property type="entry name" value="ClpX"/>
    <property type="match status" value="1"/>
</dbReference>
<dbReference type="InterPro" id="IPR003593">
    <property type="entry name" value="AAA+_ATPase"/>
</dbReference>
<dbReference type="InterPro" id="IPR050052">
    <property type="entry name" value="ATP-dep_Clp_protease_ClpX"/>
</dbReference>
<dbReference type="InterPro" id="IPR003959">
    <property type="entry name" value="ATPase_AAA_core"/>
</dbReference>
<dbReference type="InterPro" id="IPR019489">
    <property type="entry name" value="Clp_ATPase_C"/>
</dbReference>
<dbReference type="InterPro" id="IPR004487">
    <property type="entry name" value="Clp_protease_ATP-bd_su_ClpX"/>
</dbReference>
<dbReference type="InterPro" id="IPR046425">
    <property type="entry name" value="ClpX_bact"/>
</dbReference>
<dbReference type="InterPro" id="IPR027417">
    <property type="entry name" value="P-loop_NTPase"/>
</dbReference>
<dbReference type="InterPro" id="IPR010603">
    <property type="entry name" value="Znf_CppX_C4"/>
</dbReference>
<dbReference type="InterPro" id="IPR038366">
    <property type="entry name" value="Znf_CppX_C4_sf"/>
</dbReference>
<dbReference type="NCBIfam" id="TIGR00382">
    <property type="entry name" value="clpX"/>
    <property type="match status" value="1"/>
</dbReference>
<dbReference type="NCBIfam" id="NF003745">
    <property type="entry name" value="PRK05342.1"/>
    <property type="match status" value="1"/>
</dbReference>
<dbReference type="PANTHER" id="PTHR48102:SF7">
    <property type="entry name" value="ATP-DEPENDENT CLP PROTEASE ATP-BINDING SUBUNIT CLPX-LIKE, MITOCHONDRIAL"/>
    <property type="match status" value="1"/>
</dbReference>
<dbReference type="PANTHER" id="PTHR48102">
    <property type="entry name" value="ATP-DEPENDENT CLP PROTEASE ATP-BINDING SUBUNIT CLPX-LIKE, MITOCHONDRIAL-RELATED"/>
    <property type="match status" value="1"/>
</dbReference>
<dbReference type="Pfam" id="PF07724">
    <property type="entry name" value="AAA_2"/>
    <property type="match status" value="1"/>
</dbReference>
<dbReference type="Pfam" id="PF10431">
    <property type="entry name" value="ClpB_D2-small"/>
    <property type="match status" value="1"/>
</dbReference>
<dbReference type="Pfam" id="PF06689">
    <property type="entry name" value="zf-C4_ClpX"/>
    <property type="match status" value="1"/>
</dbReference>
<dbReference type="SMART" id="SM00382">
    <property type="entry name" value="AAA"/>
    <property type="match status" value="1"/>
</dbReference>
<dbReference type="SMART" id="SM01086">
    <property type="entry name" value="ClpB_D2-small"/>
    <property type="match status" value="1"/>
</dbReference>
<dbReference type="SMART" id="SM00994">
    <property type="entry name" value="zf-C4_ClpX"/>
    <property type="match status" value="1"/>
</dbReference>
<dbReference type="SUPFAM" id="SSF57716">
    <property type="entry name" value="Glucocorticoid receptor-like (DNA-binding domain)"/>
    <property type="match status" value="1"/>
</dbReference>
<dbReference type="SUPFAM" id="SSF52540">
    <property type="entry name" value="P-loop containing nucleoside triphosphate hydrolases"/>
    <property type="match status" value="1"/>
</dbReference>
<dbReference type="PROSITE" id="PS51902">
    <property type="entry name" value="CLPX_ZB"/>
    <property type="match status" value="1"/>
</dbReference>
<keyword id="KW-0067">ATP-binding</keyword>
<keyword id="KW-0143">Chaperone</keyword>
<keyword id="KW-0479">Metal-binding</keyword>
<keyword id="KW-0547">Nucleotide-binding</keyword>
<keyword id="KW-1185">Reference proteome</keyword>
<keyword id="KW-0862">Zinc</keyword>
<feature type="chain" id="PRO_1000097922" description="ATP-dependent Clp protease ATP-binding subunit ClpX">
    <location>
        <begin position="1"/>
        <end position="421"/>
    </location>
</feature>
<feature type="domain" description="ClpX-type ZB" evidence="2">
    <location>
        <begin position="3"/>
        <end position="56"/>
    </location>
</feature>
<feature type="binding site" evidence="2">
    <location>
        <position position="15"/>
    </location>
    <ligand>
        <name>Zn(2+)</name>
        <dbReference type="ChEBI" id="CHEBI:29105"/>
    </ligand>
</feature>
<feature type="binding site" evidence="2">
    <location>
        <position position="18"/>
    </location>
    <ligand>
        <name>Zn(2+)</name>
        <dbReference type="ChEBI" id="CHEBI:29105"/>
    </ligand>
</feature>
<feature type="binding site" evidence="2">
    <location>
        <position position="37"/>
    </location>
    <ligand>
        <name>Zn(2+)</name>
        <dbReference type="ChEBI" id="CHEBI:29105"/>
    </ligand>
</feature>
<feature type="binding site" evidence="2">
    <location>
        <position position="40"/>
    </location>
    <ligand>
        <name>Zn(2+)</name>
        <dbReference type="ChEBI" id="CHEBI:29105"/>
    </ligand>
</feature>
<feature type="binding site" evidence="1">
    <location>
        <begin position="119"/>
        <end position="126"/>
    </location>
    <ligand>
        <name>ATP</name>
        <dbReference type="ChEBI" id="CHEBI:30616"/>
    </ligand>
</feature>
<organism>
    <name type="scientific">Beijerinckia indica subsp. indica (strain ATCC 9039 / DSM 1715 / NCIMB 8712)</name>
    <dbReference type="NCBI Taxonomy" id="395963"/>
    <lineage>
        <taxon>Bacteria</taxon>
        <taxon>Pseudomonadati</taxon>
        <taxon>Pseudomonadota</taxon>
        <taxon>Alphaproteobacteria</taxon>
        <taxon>Hyphomicrobiales</taxon>
        <taxon>Beijerinckiaceae</taxon>
        <taxon>Beijerinckia</taxon>
    </lineage>
</organism>
<protein>
    <recommendedName>
        <fullName evidence="1">ATP-dependent Clp protease ATP-binding subunit ClpX</fullName>
    </recommendedName>
</protein>
<reference key="1">
    <citation type="journal article" date="2010" name="J. Bacteriol.">
        <title>Complete genome sequence of Beijerinckia indica subsp. indica.</title>
        <authorList>
            <person name="Tamas I."/>
            <person name="Dedysh S.N."/>
            <person name="Liesack W."/>
            <person name="Stott M.B."/>
            <person name="Alam M."/>
            <person name="Murrell J.C."/>
            <person name="Dunfield P.F."/>
        </authorList>
    </citation>
    <scope>NUCLEOTIDE SEQUENCE [LARGE SCALE GENOMIC DNA]</scope>
    <source>
        <strain>ATCC 9039 / DSM 1715 / NCIMB 8712</strain>
    </source>
</reference>
<accession>B2IGP2</accession>